<protein>
    <recommendedName>
        <fullName>Superoxide dismutase [Ni]</fullName>
        <ecNumber>1.15.1.1</ecNumber>
    </recommendedName>
    <alternativeName>
        <fullName>NiSOD</fullName>
    </alternativeName>
    <alternativeName>
        <fullName>Nickel-containing superoxide dismutase</fullName>
    </alternativeName>
</protein>
<sequence>MLSRLFAPKVTVSAHCDLPCGVYDPAQARIEAESVKAVQEKMAGNDDPHFQTRATVIKEQRAELAKHHVSVLWSDYFKPPHFEKYPELHQLVNDTLKALSAAKGSKDPATGQKALDYIAQIDKIFWETKKA</sequence>
<organism>
    <name type="scientific">Streptomyces coelicolor (strain ATCC BAA-471 / A3(2) / M145)</name>
    <dbReference type="NCBI Taxonomy" id="100226"/>
    <lineage>
        <taxon>Bacteria</taxon>
        <taxon>Bacillati</taxon>
        <taxon>Actinomycetota</taxon>
        <taxon>Actinomycetes</taxon>
        <taxon>Kitasatosporales</taxon>
        <taxon>Streptomycetaceae</taxon>
        <taxon>Streptomyces</taxon>
        <taxon>Streptomyces albidoflavus group</taxon>
    </lineage>
</organism>
<comment type="catalytic activity">
    <reaction>
        <text>2 superoxide + 2 H(+) = H2O2 + O2</text>
        <dbReference type="Rhea" id="RHEA:20696"/>
        <dbReference type="ChEBI" id="CHEBI:15378"/>
        <dbReference type="ChEBI" id="CHEBI:15379"/>
        <dbReference type="ChEBI" id="CHEBI:16240"/>
        <dbReference type="ChEBI" id="CHEBI:18421"/>
        <dbReference type="EC" id="1.15.1.1"/>
    </reaction>
</comment>
<comment type="cofactor">
    <cofactor>
        <name>Ni(2+)</name>
        <dbReference type="ChEBI" id="CHEBI:49786"/>
    </cofactor>
</comment>
<comment type="subunit">
    <text evidence="1">Homohexamer. The hexameric protein has a roughly the shape of a hollow sphere with an outer diameter of 60 angstroms and a large interior cavity.</text>
</comment>
<comment type="subcellular location">
    <subcellularLocation>
        <location>Cytoplasm</location>
    </subcellularLocation>
</comment>
<comment type="similarity">
    <text evidence="4">Belongs to the nickel superoxide dismutase family.</text>
</comment>
<keyword id="KW-0002">3D-structure</keyword>
<keyword id="KW-0049">Antioxidant</keyword>
<keyword id="KW-0963">Cytoplasm</keyword>
<keyword id="KW-0903">Direct protein sequencing</keyword>
<keyword id="KW-0479">Metal-binding</keyword>
<keyword id="KW-0533">Nickel</keyword>
<keyword id="KW-0560">Oxidoreductase</keyword>
<keyword id="KW-1185">Reference proteome</keyword>
<proteinExistence type="evidence at protein level"/>
<name>SODN_STRCO</name>
<reference key="1">
    <citation type="journal article" date="1998" name="Mol. Microbiol.">
        <title>Transcriptional and post-transcriptional regulation by nickel of sodN gene encoding nickel-containing superoxide dismutase from Streptomyces coelicolor Muller.</title>
        <authorList>
            <person name="Kim E.-J."/>
            <person name="Chung H.-J."/>
            <person name="Suh B."/>
            <person name="Hah Y.C."/>
            <person name="Roe J.-H."/>
        </authorList>
    </citation>
    <scope>NUCLEOTIDE SEQUENCE [GENOMIC DNA]</scope>
    <source>
        <strain>ATCC 10147 / DSM 41007 / JCM 4020 / NBRC 3176 / KCC S-0020</strain>
        <strain>ATCC BAA-471 / A3(2) / M145</strain>
    </source>
</reference>
<reference key="2">
    <citation type="journal article" date="2002" name="Nature">
        <title>Complete genome sequence of the model actinomycete Streptomyces coelicolor A3(2).</title>
        <authorList>
            <person name="Bentley S.D."/>
            <person name="Chater K.F."/>
            <person name="Cerdeno-Tarraga A.-M."/>
            <person name="Challis G.L."/>
            <person name="Thomson N.R."/>
            <person name="James K.D."/>
            <person name="Harris D.E."/>
            <person name="Quail M.A."/>
            <person name="Kieser H."/>
            <person name="Harper D."/>
            <person name="Bateman A."/>
            <person name="Brown S."/>
            <person name="Chandra G."/>
            <person name="Chen C.W."/>
            <person name="Collins M."/>
            <person name="Cronin A."/>
            <person name="Fraser A."/>
            <person name="Goble A."/>
            <person name="Hidalgo J."/>
            <person name="Hornsby T."/>
            <person name="Howarth S."/>
            <person name="Huang C.-H."/>
            <person name="Kieser T."/>
            <person name="Larke L."/>
            <person name="Murphy L.D."/>
            <person name="Oliver K."/>
            <person name="O'Neil S."/>
            <person name="Rabbinowitsch E."/>
            <person name="Rajandream M.A."/>
            <person name="Rutherford K.M."/>
            <person name="Rutter S."/>
            <person name="Seeger K."/>
            <person name="Saunders D."/>
            <person name="Sharp S."/>
            <person name="Squares R."/>
            <person name="Squares S."/>
            <person name="Taylor K."/>
            <person name="Warren T."/>
            <person name="Wietzorrek A."/>
            <person name="Woodward J.R."/>
            <person name="Barrell B.G."/>
            <person name="Parkhill J."/>
            <person name="Hopwood D.A."/>
        </authorList>
    </citation>
    <scope>NUCLEOTIDE SEQUENCE [LARGE SCALE GENOMIC DNA]</scope>
    <source>
        <strain>ATCC BAA-471 / A3(2) / M145</strain>
    </source>
</reference>
<reference key="3">
    <citation type="journal article" date="1996" name="Biochem. J.">
        <title>A novel nickel-containing superoxide dismutase from Streptomyces spp.</title>
        <authorList>
            <person name="Youn H.-D."/>
            <person name="Kim E.-J."/>
            <person name="Roe J.-H."/>
            <person name="Hah Y.C."/>
            <person name="Kang S.-O."/>
        </authorList>
    </citation>
    <scope>PROTEIN SEQUENCE OF 15-28</scope>
    <source>
        <strain>ATCC 10147 / DSM 41007 / JCM 4020 / NBRC 3176 / KCC S-0020</strain>
    </source>
</reference>
<reference key="4">
    <citation type="journal article" date="1996" name="Eur. J. Biochem.">
        <title>Differential expression of superoxide dismutases containing Ni and Fe/Zn in Streptomyces coelicolor.</title>
        <authorList>
            <person name="Kim F.-J."/>
            <person name="Kim H.-P."/>
            <person name="Hah Y.V."/>
            <person name="Roe J.-H."/>
        </authorList>
    </citation>
    <scope>PROTEIN SEQUENCE OF 15-28</scope>
    <source>
        <strain>ATCC 10147 / DSM 41007 / JCM 4020 / NBRC 3176 / KCC S-0020</strain>
    </source>
</reference>
<reference key="5">
    <citation type="journal article" date="2004" name="Biochemistry">
        <title>Nickel superoxide dismutase structure and mechanism.</title>
        <authorList>
            <person name="Barondeau D.P."/>
            <person name="Kassmann C.J."/>
            <person name="Bruns C.K."/>
            <person name="Tainer J.A."/>
            <person name="Getzoff E.D."/>
        </authorList>
    </citation>
    <scope>X-RAY CRYSTALLOGRAPHY (1.3 ANGSTROMS) OF 15-131 IN COMPLEX WITH NICKEL IONS</scope>
    <scope>SUBUNIT</scope>
</reference>
<accession>P80735</accession>
<accession>O51921</accession>
<gene>
    <name type="primary">sodN</name>
    <name type="synonym">sod1</name>
    <name type="ordered locus">SCO5254</name>
    <name type="ORF">2SC7G11.16c</name>
</gene>
<feature type="propeptide" id="PRO_0000032906" evidence="2 3">
    <location>
        <begin position="1"/>
        <end position="14"/>
    </location>
</feature>
<feature type="chain" id="PRO_0000032907" description="Superoxide dismutase [Ni]">
    <location>
        <begin position="15"/>
        <end position="131"/>
    </location>
</feature>
<feature type="binding site">
    <location>
        <position position="15"/>
    </location>
    <ligand>
        <name>Ni(2+)</name>
        <dbReference type="ChEBI" id="CHEBI:49786"/>
        <note>catalytic</note>
    </ligand>
</feature>
<feature type="binding site">
    <location>
        <position position="16"/>
    </location>
    <ligand>
        <name>Ni(2+)</name>
        <dbReference type="ChEBI" id="CHEBI:49786"/>
        <note>catalytic</note>
    </ligand>
</feature>
<feature type="binding site">
    <location>
        <position position="20"/>
    </location>
    <ligand>
        <name>Ni(2+)</name>
        <dbReference type="ChEBI" id="CHEBI:49786"/>
        <note>catalytic</note>
    </ligand>
</feature>
<feature type="sequence conflict" description="In Ref. 3; AA sequence and 4; AA sequence." evidence="4" ref="3 4">
    <original>C</original>
    <variation>G</variation>
    <location>
        <position position="16"/>
    </location>
</feature>
<feature type="sequence conflict" description="In Ref. 3; AA sequence and 4; AA sequence." evidence="4" ref="3 4">
    <original>C</original>
    <variation>G</variation>
    <location>
        <position position="20"/>
    </location>
</feature>
<feature type="strand" evidence="6">
    <location>
        <begin position="17"/>
        <end position="19"/>
    </location>
</feature>
<feature type="helix" evidence="5">
    <location>
        <begin position="26"/>
        <end position="44"/>
    </location>
</feature>
<feature type="helix" evidence="5">
    <location>
        <begin position="48"/>
        <end position="75"/>
    </location>
</feature>
<feature type="helix" evidence="5">
    <location>
        <begin position="79"/>
        <end position="84"/>
    </location>
</feature>
<feature type="helix" evidence="5">
    <location>
        <begin position="88"/>
        <end position="103"/>
    </location>
</feature>
<feature type="helix" evidence="5">
    <location>
        <begin position="108"/>
        <end position="128"/>
    </location>
</feature>
<dbReference type="EC" id="1.15.1.1"/>
<dbReference type="EMBL" id="AF012193">
    <property type="protein sequence ID" value="AAC38082.1"/>
    <property type="molecule type" value="Genomic_DNA"/>
</dbReference>
<dbReference type="EMBL" id="AF104994">
    <property type="protein sequence ID" value="AAF25537.1"/>
    <property type="molecule type" value="Genomic_DNA"/>
</dbReference>
<dbReference type="EMBL" id="AL939123">
    <property type="protein sequence ID" value="CAC05965.1"/>
    <property type="molecule type" value="Genomic_DNA"/>
</dbReference>
<dbReference type="RefSeq" id="NP_629400.1">
    <property type="nucleotide sequence ID" value="NC_003888.3"/>
</dbReference>
<dbReference type="RefSeq" id="WP_003973716.1">
    <property type="nucleotide sequence ID" value="NZ_VNID01000008.1"/>
</dbReference>
<dbReference type="PDB" id="1T6I">
    <property type="method" value="X-ray"/>
    <property type="resolution" value="2.81 A"/>
    <property type="chains" value="A/B/C=15-131"/>
</dbReference>
<dbReference type="PDB" id="1T6Q">
    <property type="method" value="X-ray"/>
    <property type="resolution" value="2.05 A"/>
    <property type="chains" value="A/B/C=15-131"/>
</dbReference>
<dbReference type="PDB" id="1T6U">
    <property type="method" value="X-ray"/>
    <property type="resolution" value="1.30 A"/>
    <property type="chains" value="A/B/C/D/E/F/G/H/I/J/K/L=15-131"/>
</dbReference>
<dbReference type="PDB" id="3G4X">
    <property type="method" value="X-ray"/>
    <property type="resolution" value="2.01 A"/>
    <property type="chains" value="A/B/C=15-131"/>
</dbReference>
<dbReference type="PDB" id="3G4Z">
    <property type="method" value="X-ray"/>
    <property type="resolution" value="1.87 A"/>
    <property type="chains" value="A/B/C=15-131"/>
</dbReference>
<dbReference type="PDB" id="3G50">
    <property type="method" value="X-ray"/>
    <property type="resolution" value="1.90 A"/>
    <property type="chains" value="A/B/C=15-131"/>
</dbReference>
<dbReference type="PDB" id="4NCQ">
    <property type="method" value="X-ray"/>
    <property type="resolution" value="2.08 A"/>
    <property type="chains" value="A/B/C=15-131"/>
</dbReference>
<dbReference type="PDBsum" id="1T6I"/>
<dbReference type="PDBsum" id="1T6Q"/>
<dbReference type="PDBsum" id="1T6U"/>
<dbReference type="PDBsum" id="3G4X"/>
<dbReference type="PDBsum" id="3G4Z"/>
<dbReference type="PDBsum" id="3G50"/>
<dbReference type="PDBsum" id="4NCQ"/>
<dbReference type="SMR" id="P80735"/>
<dbReference type="STRING" id="100226.gene:17762905"/>
<dbReference type="PaxDb" id="100226-SCO5254"/>
<dbReference type="GeneID" id="97462394"/>
<dbReference type="KEGG" id="sco:SCO5254"/>
<dbReference type="PATRIC" id="fig|100226.15.peg.5338"/>
<dbReference type="eggNOG" id="ENOG502ZR3M">
    <property type="taxonomic scope" value="Bacteria"/>
</dbReference>
<dbReference type="HOGENOM" id="CLU_141681_0_0_11"/>
<dbReference type="InParanoid" id="P80735"/>
<dbReference type="OrthoDB" id="9790847at2"/>
<dbReference type="EvolutionaryTrace" id="P80735"/>
<dbReference type="Proteomes" id="UP000001973">
    <property type="component" value="Chromosome"/>
</dbReference>
<dbReference type="GO" id="GO:0005737">
    <property type="term" value="C:cytoplasm"/>
    <property type="evidence" value="ECO:0007669"/>
    <property type="project" value="UniProtKB-SubCell"/>
</dbReference>
<dbReference type="GO" id="GO:0016151">
    <property type="term" value="F:nickel cation binding"/>
    <property type="evidence" value="ECO:0007669"/>
    <property type="project" value="InterPro"/>
</dbReference>
<dbReference type="GO" id="GO:0004784">
    <property type="term" value="F:superoxide dismutase activity"/>
    <property type="evidence" value="ECO:0007669"/>
    <property type="project" value="UniProtKB-EC"/>
</dbReference>
<dbReference type="Gene3D" id="1.20.120.400">
    <property type="entry name" value="Nickel-containing superoxide dismutase"/>
    <property type="match status" value="1"/>
</dbReference>
<dbReference type="InterPro" id="IPR036502">
    <property type="entry name" value="NiSOD_sf"/>
</dbReference>
<dbReference type="InterPro" id="IPR014123">
    <property type="entry name" value="Superoxide_dismutase_Ni-type"/>
</dbReference>
<dbReference type="NCBIfam" id="TIGR02753">
    <property type="entry name" value="sodN"/>
    <property type="match status" value="1"/>
</dbReference>
<dbReference type="Pfam" id="PF09055">
    <property type="entry name" value="Sod_Ni"/>
    <property type="match status" value="1"/>
</dbReference>
<dbReference type="SUPFAM" id="SSF109770">
    <property type="entry name" value="Nickel-containing superoxide dismutase, NiSOD"/>
    <property type="match status" value="1"/>
</dbReference>
<evidence type="ECO:0000269" key="1">
    <source>
    </source>
</evidence>
<evidence type="ECO:0000269" key="2">
    <source>
    </source>
</evidence>
<evidence type="ECO:0000269" key="3">
    <source>
    </source>
</evidence>
<evidence type="ECO:0000305" key="4"/>
<evidence type="ECO:0007829" key="5">
    <source>
        <dbReference type="PDB" id="1T6U"/>
    </source>
</evidence>
<evidence type="ECO:0007829" key="6">
    <source>
        <dbReference type="PDB" id="3G4Z"/>
    </source>
</evidence>